<protein>
    <recommendedName>
        <fullName evidence="1">Large ribosomal subunit protein bL9</fullName>
    </recommendedName>
    <alternativeName>
        <fullName evidence="2">50S ribosomal protein L9</fullName>
    </alternativeName>
</protein>
<gene>
    <name evidence="1" type="primary">rplI</name>
    <name type="ordered locus">Ajs_3213</name>
</gene>
<accession>A1WAR1</accession>
<name>RL9_ACISJ</name>
<comment type="function">
    <text evidence="1">Binds to the 23S rRNA.</text>
</comment>
<comment type="similarity">
    <text evidence="1">Belongs to the bacterial ribosomal protein bL9 family.</text>
</comment>
<organism>
    <name type="scientific">Acidovorax sp. (strain JS42)</name>
    <dbReference type="NCBI Taxonomy" id="232721"/>
    <lineage>
        <taxon>Bacteria</taxon>
        <taxon>Pseudomonadati</taxon>
        <taxon>Pseudomonadota</taxon>
        <taxon>Betaproteobacteria</taxon>
        <taxon>Burkholderiales</taxon>
        <taxon>Comamonadaceae</taxon>
        <taxon>Acidovorax</taxon>
    </lineage>
</organism>
<proteinExistence type="inferred from homology"/>
<evidence type="ECO:0000255" key="1">
    <source>
        <dbReference type="HAMAP-Rule" id="MF_00503"/>
    </source>
</evidence>
<evidence type="ECO:0000305" key="2"/>
<sequence length="150" mass="15968">MQIILLDKVVNLGNLGEIVKVKDGYARNFLIPTGRARRATEAAKAEFEAKRAELEKAAAEKLAAAQAQGEKLAGTTVKLTQKAGVDGRLFGSVTNHDIAEELNKQGYNVVKSQVRLPNGPIKVVGDNTVTVALHTDVAVEVTVSVYGETA</sequence>
<dbReference type="EMBL" id="CP000539">
    <property type="protein sequence ID" value="ABM43336.1"/>
    <property type="molecule type" value="Genomic_DNA"/>
</dbReference>
<dbReference type="SMR" id="A1WAR1"/>
<dbReference type="STRING" id="232721.Ajs_3213"/>
<dbReference type="KEGG" id="ajs:Ajs_3213"/>
<dbReference type="eggNOG" id="COG0359">
    <property type="taxonomic scope" value="Bacteria"/>
</dbReference>
<dbReference type="HOGENOM" id="CLU_078938_4_1_4"/>
<dbReference type="Proteomes" id="UP000000645">
    <property type="component" value="Chromosome"/>
</dbReference>
<dbReference type="GO" id="GO:1990904">
    <property type="term" value="C:ribonucleoprotein complex"/>
    <property type="evidence" value="ECO:0007669"/>
    <property type="project" value="UniProtKB-KW"/>
</dbReference>
<dbReference type="GO" id="GO:0005840">
    <property type="term" value="C:ribosome"/>
    <property type="evidence" value="ECO:0007669"/>
    <property type="project" value="UniProtKB-KW"/>
</dbReference>
<dbReference type="GO" id="GO:0019843">
    <property type="term" value="F:rRNA binding"/>
    <property type="evidence" value="ECO:0007669"/>
    <property type="project" value="UniProtKB-UniRule"/>
</dbReference>
<dbReference type="GO" id="GO:0003735">
    <property type="term" value="F:structural constituent of ribosome"/>
    <property type="evidence" value="ECO:0007669"/>
    <property type="project" value="InterPro"/>
</dbReference>
<dbReference type="GO" id="GO:0006412">
    <property type="term" value="P:translation"/>
    <property type="evidence" value="ECO:0007669"/>
    <property type="project" value="UniProtKB-UniRule"/>
</dbReference>
<dbReference type="Gene3D" id="3.10.430.100">
    <property type="entry name" value="Ribosomal protein L9, C-terminal domain"/>
    <property type="match status" value="1"/>
</dbReference>
<dbReference type="Gene3D" id="3.40.5.10">
    <property type="entry name" value="Ribosomal protein L9, N-terminal domain"/>
    <property type="match status" value="1"/>
</dbReference>
<dbReference type="HAMAP" id="MF_00503">
    <property type="entry name" value="Ribosomal_bL9"/>
    <property type="match status" value="1"/>
</dbReference>
<dbReference type="InterPro" id="IPR000244">
    <property type="entry name" value="Ribosomal_bL9"/>
</dbReference>
<dbReference type="InterPro" id="IPR009027">
    <property type="entry name" value="Ribosomal_bL9/RNase_H1_N"/>
</dbReference>
<dbReference type="InterPro" id="IPR020594">
    <property type="entry name" value="Ribosomal_bL9_bac/chp"/>
</dbReference>
<dbReference type="InterPro" id="IPR020069">
    <property type="entry name" value="Ribosomal_bL9_C"/>
</dbReference>
<dbReference type="InterPro" id="IPR036791">
    <property type="entry name" value="Ribosomal_bL9_C_sf"/>
</dbReference>
<dbReference type="InterPro" id="IPR020070">
    <property type="entry name" value="Ribosomal_bL9_N"/>
</dbReference>
<dbReference type="InterPro" id="IPR036935">
    <property type="entry name" value="Ribosomal_bL9_N_sf"/>
</dbReference>
<dbReference type="NCBIfam" id="TIGR00158">
    <property type="entry name" value="L9"/>
    <property type="match status" value="1"/>
</dbReference>
<dbReference type="PANTHER" id="PTHR21368">
    <property type="entry name" value="50S RIBOSOMAL PROTEIN L9"/>
    <property type="match status" value="1"/>
</dbReference>
<dbReference type="Pfam" id="PF03948">
    <property type="entry name" value="Ribosomal_L9_C"/>
    <property type="match status" value="1"/>
</dbReference>
<dbReference type="Pfam" id="PF01281">
    <property type="entry name" value="Ribosomal_L9_N"/>
    <property type="match status" value="1"/>
</dbReference>
<dbReference type="SUPFAM" id="SSF55658">
    <property type="entry name" value="L9 N-domain-like"/>
    <property type="match status" value="1"/>
</dbReference>
<dbReference type="SUPFAM" id="SSF55653">
    <property type="entry name" value="Ribosomal protein L9 C-domain"/>
    <property type="match status" value="1"/>
</dbReference>
<dbReference type="PROSITE" id="PS00651">
    <property type="entry name" value="RIBOSOMAL_L9"/>
    <property type="match status" value="1"/>
</dbReference>
<keyword id="KW-0687">Ribonucleoprotein</keyword>
<keyword id="KW-0689">Ribosomal protein</keyword>
<keyword id="KW-0694">RNA-binding</keyword>
<keyword id="KW-0699">rRNA-binding</keyword>
<reference key="1">
    <citation type="submission" date="2006-12" db="EMBL/GenBank/DDBJ databases">
        <title>Complete sequence of chromosome 1 of Acidovorax sp. JS42.</title>
        <authorList>
            <person name="Copeland A."/>
            <person name="Lucas S."/>
            <person name="Lapidus A."/>
            <person name="Barry K."/>
            <person name="Detter J.C."/>
            <person name="Glavina del Rio T."/>
            <person name="Dalin E."/>
            <person name="Tice H."/>
            <person name="Pitluck S."/>
            <person name="Chertkov O."/>
            <person name="Brettin T."/>
            <person name="Bruce D."/>
            <person name="Han C."/>
            <person name="Tapia R."/>
            <person name="Gilna P."/>
            <person name="Schmutz J."/>
            <person name="Larimer F."/>
            <person name="Land M."/>
            <person name="Hauser L."/>
            <person name="Kyrpides N."/>
            <person name="Kim E."/>
            <person name="Stahl D."/>
            <person name="Richardson P."/>
        </authorList>
    </citation>
    <scope>NUCLEOTIDE SEQUENCE [LARGE SCALE GENOMIC DNA]</scope>
    <source>
        <strain>JS42</strain>
    </source>
</reference>
<feature type="chain" id="PRO_1000014730" description="Large ribosomal subunit protein bL9">
    <location>
        <begin position="1"/>
        <end position="150"/>
    </location>
</feature>